<keyword id="KW-0240">DNA-directed RNA polymerase</keyword>
<keyword id="KW-0548">Nucleotidyltransferase</keyword>
<keyword id="KW-0804">Transcription</keyword>
<keyword id="KW-0808">Transferase</keyword>
<comment type="function">
    <text evidence="1">Promotes RNA polymerase assembly. Latches the N- and C-terminal regions of the beta' subunit thereby facilitating its interaction with the beta and alpha subunits.</text>
</comment>
<comment type="catalytic activity">
    <reaction evidence="1">
        <text>RNA(n) + a ribonucleoside 5'-triphosphate = RNA(n+1) + diphosphate</text>
        <dbReference type="Rhea" id="RHEA:21248"/>
        <dbReference type="Rhea" id="RHEA-COMP:14527"/>
        <dbReference type="Rhea" id="RHEA-COMP:17342"/>
        <dbReference type="ChEBI" id="CHEBI:33019"/>
        <dbReference type="ChEBI" id="CHEBI:61557"/>
        <dbReference type="ChEBI" id="CHEBI:140395"/>
        <dbReference type="EC" id="2.7.7.6"/>
    </reaction>
</comment>
<comment type="subunit">
    <text evidence="1">The RNAP catalytic core consists of 2 alpha, 1 beta, 1 beta' and 1 omega subunit. When a sigma factor is associated with the core the holoenzyme is formed, which can initiate transcription.</text>
</comment>
<comment type="similarity">
    <text evidence="1">Belongs to the RNA polymerase subunit omega family.</text>
</comment>
<organism>
    <name type="scientific">Helicobacter pylori (strain Shi470)</name>
    <dbReference type="NCBI Taxonomy" id="512562"/>
    <lineage>
        <taxon>Bacteria</taxon>
        <taxon>Pseudomonadati</taxon>
        <taxon>Campylobacterota</taxon>
        <taxon>Epsilonproteobacteria</taxon>
        <taxon>Campylobacterales</taxon>
        <taxon>Helicobacteraceae</taxon>
        <taxon>Helicobacter</taxon>
    </lineage>
</organism>
<proteinExistence type="inferred from homology"/>
<name>RPOZ_HELPS</name>
<evidence type="ECO:0000255" key="1">
    <source>
        <dbReference type="HAMAP-Rule" id="MF_00366"/>
    </source>
</evidence>
<feature type="chain" id="PRO_1000121233" description="DNA-directed RNA polymerase subunit omega">
    <location>
        <begin position="1"/>
        <end position="74"/>
    </location>
</feature>
<accession>B2UT54</accession>
<sequence length="74" mass="8533">MKKERTESLVAQALKNIGNDRYMLDNLVFVRVKQLNAGAKTLVNMDPKRHKLVDIAIREIAEGKIDIDRIDERN</sequence>
<protein>
    <recommendedName>
        <fullName evidence="1">DNA-directed RNA polymerase subunit omega</fullName>
        <shortName evidence="1">RNAP omega subunit</shortName>
        <ecNumber evidence="1">2.7.7.6</ecNumber>
    </recommendedName>
    <alternativeName>
        <fullName evidence="1">RNA polymerase omega subunit</fullName>
    </alternativeName>
    <alternativeName>
        <fullName evidence="1">Transcriptase subunit omega</fullName>
    </alternativeName>
</protein>
<gene>
    <name evidence="1" type="primary">rpoZ</name>
    <name type="ordered locus">HPSH_02930</name>
</gene>
<dbReference type="EC" id="2.7.7.6" evidence="1"/>
<dbReference type="EMBL" id="CP001072">
    <property type="protein sequence ID" value="ACD48036.1"/>
    <property type="molecule type" value="Genomic_DNA"/>
</dbReference>
<dbReference type="RefSeq" id="WP_000712204.1">
    <property type="nucleotide sequence ID" value="NC_010698.2"/>
</dbReference>
<dbReference type="SMR" id="B2UT54"/>
<dbReference type="KEGG" id="hps:HPSH_02930"/>
<dbReference type="HOGENOM" id="CLU_125406_3_0_7"/>
<dbReference type="GO" id="GO:0000428">
    <property type="term" value="C:DNA-directed RNA polymerase complex"/>
    <property type="evidence" value="ECO:0007669"/>
    <property type="project" value="UniProtKB-KW"/>
</dbReference>
<dbReference type="GO" id="GO:0003677">
    <property type="term" value="F:DNA binding"/>
    <property type="evidence" value="ECO:0007669"/>
    <property type="project" value="UniProtKB-UniRule"/>
</dbReference>
<dbReference type="GO" id="GO:0003899">
    <property type="term" value="F:DNA-directed RNA polymerase activity"/>
    <property type="evidence" value="ECO:0007669"/>
    <property type="project" value="UniProtKB-UniRule"/>
</dbReference>
<dbReference type="GO" id="GO:0006351">
    <property type="term" value="P:DNA-templated transcription"/>
    <property type="evidence" value="ECO:0007669"/>
    <property type="project" value="UniProtKB-UniRule"/>
</dbReference>
<dbReference type="Gene3D" id="3.90.940.10">
    <property type="match status" value="1"/>
</dbReference>
<dbReference type="HAMAP" id="MF_00366">
    <property type="entry name" value="RNApol_bact_RpoZ"/>
    <property type="match status" value="1"/>
</dbReference>
<dbReference type="InterPro" id="IPR003716">
    <property type="entry name" value="DNA-dir_RNA_pol_omega"/>
</dbReference>
<dbReference type="InterPro" id="IPR006110">
    <property type="entry name" value="Pol_omega/Rpo6/RPB6"/>
</dbReference>
<dbReference type="InterPro" id="IPR036161">
    <property type="entry name" value="RPB6/omega-like_sf"/>
</dbReference>
<dbReference type="NCBIfam" id="NF001579">
    <property type="entry name" value="PRK00392.6-2"/>
    <property type="match status" value="1"/>
</dbReference>
<dbReference type="NCBIfam" id="TIGR00690">
    <property type="entry name" value="rpoZ"/>
    <property type="match status" value="1"/>
</dbReference>
<dbReference type="Pfam" id="PF01192">
    <property type="entry name" value="RNA_pol_Rpb6"/>
    <property type="match status" value="1"/>
</dbReference>
<dbReference type="SMART" id="SM01409">
    <property type="entry name" value="RNA_pol_Rpb6"/>
    <property type="match status" value="1"/>
</dbReference>
<dbReference type="SUPFAM" id="SSF63562">
    <property type="entry name" value="RPB6/omega subunit-like"/>
    <property type="match status" value="1"/>
</dbReference>
<reference key="1">
    <citation type="submission" date="2008-05" db="EMBL/GenBank/DDBJ databases">
        <title>Genome sequence of Helicobacter pylori from the remote Amazon: traces of Asian ancestry of the first Americans.</title>
        <authorList>
            <person name="Kersulyte D."/>
            <person name="Kalia A."/>
            <person name="Gilman R.H."/>
            <person name="Berg D.E."/>
        </authorList>
    </citation>
    <scope>NUCLEOTIDE SEQUENCE [LARGE SCALE GENOMIC DNA]</scope>
    <source>
        <strain>Shi470</strain>
    </source>
</reference>